<accession>A6V1E2</accession>
<organism>
    <name type="scientific">Pseudomonas paraeruginosa (strain DSM 24068 / PA7)</name>
    <name type="common">Pseudomonas aeruginosa (strain PA7)</name>
    <dbReference type="NCBI Taxonomy" id="381754"/>
    <lineage>
        <taxon>Bacteria</taxon>
        <taxon>Pseudomonadati</taxon>
        <taxon>Pseudomonadota</taxon>
        <taxon>Gammaproteobacteria</taxon>
        <taxon>Pseudomonadales</taxon>
        <taxon>Pseudomonadaceae</taxon>
        <taxon>Pseudomonas</taxon>
        <taxon>Pseudomonas paraeruginosa</taxon>
    </lineage>
</organism>
<evidence type="ECO:0000255" key="1">
    <source>
        <dbReference type="HAMAP-Rule" id="MF_00523"/>
    </source>
</evidence>
<dbReference type="EC" id="2.3.1.191" evidence="1"/>
<dbReference type="EMBL" id="CP000744">
    <property type="protein sequence ID" value="ABR81687.1"/>
    <property type="molecule type" value="Genomic_DNA"/>
</dbReference>
<dbReference type="RefSeq" id="WP_003153757.1">
    <property type="nucleotide sequence ID" value="NC_009656.1"/>
</dbReference>
<dbReference type="SMR" id="A6V1E2"/>
<dbReference type="KEGG" id="pap:PSPA7_1493"/>
<dbReference type="HOGENOM" id="CLU_049865_0_1_6"/>
<dbReference type="UniPathway" id="UPA00973"/>
<dbReference type="Proteomes" id="UP000001582">
    <property type="component" value="Chromosome"/>
</dbReference>
<dbReference type="GO" id="GO:0016020">
    <property type="term" value="C:membrane"/>
    <property type="evidence" value="ECO:0007669"/>
    <property type="project" value="GOC"/>
</dbReference>
<dbReference type="GO" id="GO:0016410">
    <property type="term" value="F:N-acyltransferase activity"/>
    <property type="evidence" value="ECO:0007669"/>
    <property type="project" value="InterPro"/>
</dbReference>
<dbReference type="GO" id="GO:0009245">
    <property type="term" value="P:lipid A biosynthetic process"/>
    <property type="evidence" value="ECO:0007669"/>
    <property type="project" value="UniProtKB-UniRule"/>
</dbReference>
<dbReference type="CDD" id="cd03352">
    <property type="entry name" value="LbH_LpxD"/>
    <property type="match status" value="1"/>
</dbReference>
<dbReference type="Gene3D" id="1.20.5.170">
    <property type="match status" value="1"/>
</dbReference>
<dbReference type="Gene3D" id="2.160.10.10">
    <property type="entry name" value="Hexapeptide repeat proteins"/>
    <property type="match status" value="1"/>
</dbReference>
<dbReference type="Gene3D" id="3.40.1390.10">
    <property type="entry name" value="MurE/MurF, N-terminal domain"/>
    <property type="match status" value="1"/>
</dbReference>
<dbReference type="HAMAP" id="MF_00523">
    <property type="entry name" value="LpxD"/>
    <property type="match status" value="1"/>
</dbReference>
<dbReference type="InterPro" id="IPR001451">
    <property type="entry name" value="Hexapep"/>
</dbReference>
<dbReference type="InterPro" id="IPR018357">
    <property type="entry name" value="Hexapep_transf_CS"/>
</dbReference>
<dbReference type="InterPro" id="IPR007691">
    <property type="entry name" value="LpxD"/>
</dbReference>
<dbReference type="InterPro" id="IPR011004">
    <property type="entry name" value="Trimer_LpxA-like_sf"/>
</dbReference>
<dbReference type="InterPro" id="IPR020573">
    <property type="entry name" value="UDP_GlcNAc_AcTrfase_non-rep"/>
</dbReference>
<dbReference type="NCBIfam" id="TIGR01853">
    <property type="entry name" value="lipid_A_lpxD"/>
    <property type="match status" value="1"/>
</dbReference>
<dbReference type="NCBIfam" id="NF002060">
    <property type="entry name" value="PRK00892.1"/>
    <property type="match status" value="1"/>
</dbReference>
<dbReference type="PANTHER" id="PTHR43378">
    <property type="entry name" value="UDP-3-O-ACYLGLUCOSAMINE N-ACYLTRANSFERASE"/>
    <property type="match status" value="1"/>
</dbReference>
<dbReference type="PANTHER" id="PTHR43378:SF2">
    <property type="entry name" value="UDP-3-O-ACYLGLUCOSAMINE N-ACYLTRANSFERASE 1, MITOCHONDRIAL-RELATED"/>
    <property type="match status" value="1"/>
</dbReference>
<dbReference type="Pfam" id="PF00132">
    <property type="entry name" value="Hexapep"/>
    <property type="match status" value="1"/>
</dbReference>
<dbReference type="Pfam" id="PF04613">
    <property type="entry name" value="LpxD"/>
    <property type="match status" value="1"/>
</dbReference>
<dbReference type="SUPFAM" id="SSF51161">
    <property type="entry name" value="Trimeric LpxA-like enzymes"/>
    <property type="match status" value="1"/>
</dbReference>
<dbReference type="PROSITE" id="PS00101">
    <property type="entry name" value="HEXAPEP_TRANSFERASES"/>
    <property type="match status" value="1"/>
</dbReference>
<name>LPXD_PSEP7</name>
<reference key="1">
    <citation type="submission" date="2007-06" db="EMBL/GenBank/DDBJ databases">
        <authorList>
            <person name="Dodson R.J."/>
            <person name="Harkins D."/>
            <person name="Paulsen I.T."/>
        </authorList>
    </citation>
    <scope>NUCLEOTIDE SEQUENCE [LARGE SCALE GENOMIC DNA]</scope>
    <source>
        <strain>DSM 24068 / PA7</strain>
    </source>
</reference>
<gene>
    <name evidence="1" type="primary">lpxD</name>
    <name type="ordered locus">PSPA7_1493</name>
</gene>
<protein>
    <recommendedName>
        <fullName evidence="1">UDP-3-O-acylglucosamine N-acyltransferase</fullName>
        <ecNumber evidence="1">2.3.1.191</ecNumber>
    </recommendedName>
</protein>
<sequence>MMSTLSYTLGQLAAHVGAQVRGDADLPIQGLATLQEAGPAHLSFLANPQYRKYLPESRAGAVLLTAADADGFAGTALVVANPYLAYASLSHLFDRKPRAAAGIHPTAIVAADAEVDPSASVGAYAVIESGARIGAGVSIGAHCVIGARSVIGEGGWLAPRVTLYHDVNIGARVSIQSGAVIGGEGFGFANEKGVWQKIAQIGGVTIGDDVEIGANTTIDRGALSDTLIGNGVKLDNQIMIAHNVQIGDHTAMAACVGISGSAKIGRHCMLAGGVGLVGHIEICDNVFVTGMTMVTRSITEPGSYSSGTAMQPAAEWKKSAARIRQLDDMARRLQQLEKRLAAVTSSGDASSDA</sequence>
<comment type="function">
    <text evidence="1">Catalyzes the N-acylation of UDP-3-O-acylglucosamine using 3-hydroxyacyl-ACP as the acyl donor. Is involved in the biosynthesis of lipid A, a phosphorylated glycolipid that anchors the lipopolysaccharide to the outer membrane of the cell.</text>
</comment>
<comment type="catalytic activity">
    <reaction evidence="1">
        <text>a UDP-3-O-[(3R)-3-hydroxyacyl]-alpha-D-glucosamine + a (3R)-hydroxyacyl-[ACP] = a UDP-2-N,3-O-bis[(3R)-3-hydroxyacyl]-alpha-D-glucosamine + holo-[ACP] + H(+)</text>
        <dbReference type="Rhea" id="RHEA:53836"/>
        <dbReference type="Rhea" id="RHEA-COMP:9685"/>
        <dbReference type="Rhea" id="RHEA-COMP:9945"/>
        <dbReference type="ChEBI" id="CHEBI:15378"/>
        <dbReference type="ChEBI" id="CHEBI:64479"/>
        <dbReference type="ChEBI" id="CHEBI:78827"/>
        <dbReference type="ChEBI" id="CHEBI:137740"/>
        <dbReference type="ChEBI" id="CHEBI:137748"/>
        <dbReference type="EC" id="2.3.1.191"/>
    </reaction>
</comment>
<comment type="pathway">
    <text evidence="1">Bacterial outer membrane biogenesis; LPS lipid A biosynthesis.</text>
</comment>
<comment type="subunit">
    <text evidence="1">Homotrimer.</text>
</comment>
<comment type="similarity">
    <text evidence="1">Belongs to the transferase hexapeptide repeat family. LpxD subfamily.</text>
</comment>
<feature type="chain" id="PRO_1000050950" description="UDP-3-O-acylglucosamine N-acyltransferase">
    <location>
        <begin position="1"/>
        <end position="353"/>
    </location>
</feature>
<feature type="active site" description="Proton acceptor" evidence="1">
    <location>
        <position position="242"/>
    </location>
</feature>
<keyword id="KW-0012">Acyltransferase</keyword>
<keyword id="KW-0441">Lipid A biosynthesis</keyword>
<keyword id="KW-0444">Lipid biosynthesis</keyword>
<keyword id="KW-0443">Lipid metabolism</keyword>
<keyword id="KW-0677">Repeat</keyword>
<keyword id="KW-0808">Transferase</keyword>
<proteinExistence type="inferred from homology"/>